<evidence type="ECO:0000250" key="1">
    <source>
        <dbReference type="UniProtKB" id="P25665"/>
    </source>
</evidence>
<evidence type="ECO:0000250" key="2">
    <source>
        <dbReference type="UniProtKB" id="Q42699"/>
    </source>
</evidence>
<evidence type="ECO:0000255" key="3"/>
<evidence type="ECO:0000305" key="4"/>
<sequence length="21" mass="2246">GVTGFGFDLVRYLFAGVVDGR</sequence>
<comment type="function">
    <text evidence="2">Catalyzes the transfer of a methyl group from 5-methyltetrahydrofolate to homocysteine resulting in methionine formation.</text>
</comment>
<comment type="catalytic activity">
    <reaction evidence="2">
        <text>5-methyltetrahydropteroyltri-L-glutamate + L-homocysteine = tetrahydropteroyltri-L-glutamate + L-methionine</text>
        <dbReference type="Rhea" id="RHEA:21196"/>
        <dbReference type="ChEBI" id="CHEBI:57844"/>
        <dbReference type="ChEBI" id="CHEBI:58140"/>
        <dbReference type="ChEBI" id="CHEBI:58199"/>
        <dbReference type="ChEBI" id="CHEBI:58207"/>
        <dbReference type="EC" id="2.1.1.14"/>
    </reaction>
</comment>
<comment type="cofactor">
    <cofactor evidence="1">
        <name>Zn(2+)</name>
        <dbReference type="ChEBI" id="CHEBI:29105"/>
    </cofactor>
</comment>
<comment type="pathway">
    <text>Amino-acid biosynthesis; L-methionine biosynthesis via de novo pathway; L-methionine from L-homocysteine (MetE route): step 1/1.</text>
</comment>
<comment type="subcellular location">
    <subcellularLocation>
        <location evidence="4">Cytoplasm</location>
    </subcellularLocation>
</comment>
<comment type="similarity">
    <text evidence="3">Belongs to the vitamin-B12 independent methionine synthase family.</text>
</comment>
<accession>P84542</accession>
<reference key="1">
    <citation type="journal article" date="2006" name="Ann. Bot.">
        <title>Proteome profiling of Populus euphratica Oliv. upon heat stress.</title>
        <authorList>
            <person name="Ferreira S."/>
            <person name="Hjernoe K."/>
            <person name="Larsen M."/>
            <person name="Wingsle G."/>
            <person name="Larsen P."/>
            <person name="Fey S."/>
            <person name="Roepstorff P."/>
            <person name="Pais M.S."/>
        </authorList>
    </citation>
    <scope>PROTEIN SEQUENCE</scope>
    <source>
        <tissue>Leaf</tissue>
    </source>
</reference>
<feature type="chain" id="PRO_0000098699" description="5-methyltetrahydropteroyltriglutamate--homocysteine methyltransferase">
    <location>
        <begin position="1" status="less than"/>
        <end position="21" status="greater than"/>
    </location>
</feature>
<feature type="non-consecutive residues" evidence="4">
    <location>
        <begin position="11"/>
        <end position="12"/>
    </location>
</feature>
<feature type="non-terminal residue">
    <location>
        <position position="1"/>
    </location>
</feature>
<feature type="non-terminal residue">
    <location>
        <position position="21"/>
    </location>
</feature>
<organism>
    <name type="scientific">Populus euphratica</name>
    <name type="common">Euphrates poplar</name>
    <dbReference type="NCBI Taxonomy" id="75702"/>
    <lineage>
        <taxon>Eukaryota</taxon>
        <taxon>Viridiplantae</taxon>
        <taxon>Streptophyta</taxon>
        <taxon>Embryophyta</taxon>
        <taxon>Tracheophyta</taxon>
        <taxon>Spermatophyta</taxon>
        <taxon>Magnoliopsida</taxon>
        <taxon>eudicotyledons</taxon>
        <taxon>Gunneridae</taxon>
        <taxon>Pentapetalae</taxon>
        <taxon>rosids</taxon>
        <taxon>fabids</taxon>
        <taxon>Malpighiales</taxon>
        <taxon>Salicaceae</taxon>
        <taxon>Saliceae</taxon>
        <taxon>Populus</taxon>
    </lineage>
</organism>
<name>METE_POPEU</name>
<proteinExistence type="evidence at protein level"/>
<keyword id="KW-0028">Amino-acid biosynthesis</keyword>
<keyword id="KW-0963">Cytoplasm</keyword>
<keyword id="KW-0903">Direct protein sequencing</keyword>
<keyword id="KW-0479">Metal-binding</keyword>
<keyword id="KW-0486">Methionine biosynthesis</keyword>
<keyword id="KW-0489">Methyltransferase</keyword>
<keyword id="KW-1185">Reference proteome</keyword>
<keyword id="KW-0808">Transferase</keyword>
<keyword id="KW-0862">Zinc</keyword>
<protein>
    <recommendedName>
        <fullName>5-methyltetrahydropteroyltriglutamate--homocysteine methyltransferase</fullName>
        <ecNumber>2.1.1.14</ecNumber>
    </recommendedName>
    <alternativeName>
        <fullName>Cobalamin-independent methionine synthase isozyme</fullName>
    </alternativeName>
    <alternativeName>
        <fullName>Vitamin-B12-independent methionine synthase isozyme</fullName>
    </alternativeName>
</protein>
<dbReference type="EC" id="2.1.1.14"/>
<dbReference type="UniPathway" id="UPA00051">
    <property type="reaction ID" value="UER00082"/>
</dbReference>
<dbReference type="Proteomes" id="UP000694918">
    <property type="component" value="Unplaced"/>
</dbReference>
<dbReference type="GO" id="GO:0005737">
    <property type="term" value="C:cytoplasm"/>
    <property type="evidence" value="ECO:0007669"/>
    <property type="project" value="UniProtKB-SubCell"/>
</dbReference>
<dbReference type="GO" id="GO:0003871">
    <property type="term" value="F:5-methyltetrahydropteroyltriglutamate-homocysteine S-methyltransferase activity"/>
    <property type="evidence" value="ECO:0007669"/>
    <property type="project" value="UniProtKB-EC"/>
</dbReference>
<dbReference type="GO" id="GO:0046872">
    <property type="term" value="F:metal ion binding"/>
    <property type="evidence" value="ECO:0007669"/>
    <property type="project" value="UniProtKB-KW"/>
</dbReference>
<dbReference type="GO" id="GO:0009086">
    <property type="term" value="P:methionine biosynthetic process"/>
    <property type="evidence" value="ECO:0007669"/>
    <property type="project" value="UniProtKB-KW"/>
</dbReference>
<dbReference type="GO" id="GO:0032259">
    <property type="term" value="P:methylation"/>
    <property type="evidence" value="ECO:0007669"/>
    <property type="project" value="UniProtKB-KW"/>
</dbReference>